<proteinExistence type="inferred from homology"/>
<comment type="function">
    <text evidence="3">Cyclin-dependent kinase that acts as a master regulator of the mitotic and meiotic cell cycles.</text>
</comment>
<comment type="catalytic activity">
    <reaction evidence="5">
        <text>L-seryl-[protein] + ATP = O-phospho-L-seryl-[protein] + ADP + H(+)</text>
        <dbReference type="Rhea" id="RHEA:17989"/>
        <dbReference type="Rhea" id="RHEA-COMP:9863"/>
        <dbReference type="Rhea" id="RHEA-COMP:11604"/>
        <dbReference type="ChEBI" id="CHEBI:15378"/>
        <dbReference type="ChEBI" id="CHEBI:29999"/>
        <dbReference type="ChEBI" id="CHEBI:30616"/>
        <dbReference type="ChEBI" id="CHEBI:83421"/>
        <dbReference type="ChEBI" id="CHEBI:456216"/>
        <dbReference type="EC" id="2.7.11.22"/>
    </reaction>
</comment>
<comment type="catalytic activity">
    <reaction evidence="3">
        <text>L-threonyl-[protein] + ATP = O-phospho-L-threonyl-[protein] + ADP + H(+)</text>
        <dbReference type="Rhea" id="RHEA:46608"/>
        <dbReference type="Rhea" id="RHEA-COMP:11060"/>
        <dbReference type="Rhea" id="RHEA-COMP:11605"/>
        <dbReference type="ChEBI" id="CHEBI:15378"/>
        <dbReference type="ChEBI" id="CHEBI:30013"/>
        <dbReference type="ChEBI" id="CHEBI:30616"/>
        <dbReference type="ChEBI" id="CHEBI:61977"/>
        <dbReference type="ChEBI" id="CHEBI:456216"/>
        <dbReference type="EC" id="2.7.11.22"/>
    </reaction>
</comment>
<comment type="activity regulation">
    <text evidence="4">Phosphorylation at Thr-14 or Tyr-15 inactivates the enzyme, while phosphorylation at Thr-181 activates it.</text>
</comment>
<comment type="subunit">
    <text evidence="3">Forms a stable but non-covalent complex with a regulatory subunit (SUC1) and with a cyclin.</text>
</comment>
<comment type="similarity">
    <text evidence="9">Belongs to the protein kinase superfamily. CMGC Ser/Thr protein kinase family. CDC2/CDKX subfamily.</text>
</comment>
<gene>
    <name evidence="8" type="primary">CDC2</name>
    <name type="synonym">CDK1</name>
</gene>
<organism>
    <name type="scientific">Ajellomyces capsulatus</name>
    <name type="common">Darling's disease fungus</name>
    <name type="synonym">Histoplasma capsulatum</name>
    <dbReference type="NCBI Taxonomy" id="5037"/>
    <lineage>
        <taxon>Eukaryota</taxon>
        <taxon>Fungi</taxon>
        <taxon>Dikarya</taxon>
        <taxon>Ascomycota</taxon>
        <taxon>Pezizomycotina</taxon>
        <taxon>Eurotiomycetes</taxon>
        <taxon>Eurotiomycetidae</taxon>
        <taxon>Onygenales</taxon>
        <taxon>Ajellomycetaceae</taxon>
        <taxon>Histoplasma</taxon>
    </lineage>
</organism>
<accession>P54119</accession>
<dbReference type="EC" id="2.7.11.22" evidence="3"/>
<dbReference type="EMBL" id="X74361">
    <property type="protein sequence ID" value="CAA52405.1"/>
    <property type="molecule type" value="Genomic_DNA"/>
</dbReference>
<dbReference type="PIR" id="S36437">
    <property type="entry name" value="S36437"/>
</dbReference>
<dbReference type="SMR" id="P54119"/>
<dbReference type="VEuPathDB" id="FungiDB:I7I51_07101"/>
<dbReference type="VEuPathDB" id="FungiDB:I7I52_10599"/>
<dbReference type="OrthoDB" id="1732493at2759"/>
<dbReference type="BRENDA" id="2.7.11.22">
    <property type="organism ID" value="221"/>
</dbReference>
<dbReference type="GO" id="GO:0000307">
    <property type="term" value="C:cyclin-dependent protein kinase holoenzyme complex"/>
    <property type="evidence" value="ECO:0007669"/>
    <property type="project" value="TreeGrafter"/>
</dbReference>
<dbReference type="GO" id="GO:0005737">
    <property type="term" value="C:cytoplasm"/>
    <property type="evidence" value="ECO:0007669"/>
    <property type="project" value="TreeGrafter"/>
</dbReference>
<dbReference type="GO" id="GO:0005634">
    <property type="term" value="C:nucleus"/>
    <property type="evidence" value="ECO:0007669"/>
    <property type="project" value="TreeGrafter"/>
</dbReference>
<dbReference type="GO" id="GO:0005524">
    <property type="term" value="F:ATP binding"/>
    <property type="evidence" value="ECO:0007669"/>
    <property type="project" value="UniProtKB-KW"/>
</dbReference>
<dbReference type="GO" id="GO:0030332">
    <property type="term" value="F:cyclin binding"/>
    <property type="evidence" value="ECO:0007669"/>
    <property type="project" value="TreeGrafter"/>
</dbReference>
<dbReference type="GO" id="GO:0004693">
    <property type="term" value="F:cyclin-dependent protein serine/threonine kinase activity"/>
    <property type="evidence" value="ECO:0007669"/>
    <property type="project" value="UniProtKB-EC"/>
</dbReference>
<dbReference type="GO" id="GO:0106310">
    <property type="term" value="F:protein serine kinase activity"/>
    <property type="evidence" value="ECO:0007669"/>
    <property type="project" value="RHEA"/>
</dbReference>
<dbReference type="GO" id="GO:0051301">
    <property type="term" value="P:cell division"/>
    <property type="evidence" value="ECO:0007669"/>
    <property type="project" value="UniProtKB-KW"/>
</dbReference>
<dbReference type="GO" id="GO:0000082">
    <property type="term" value="P:G1/S transition of mitotic cell cycle"/>
    <property type="evidence" value="ECO:0007669"/>
    <property type="project" value="TreeGrafter"/>
</dbReference>
<dbReference type="GO" id="GO:0010389">
    <property type="term" value="P:regulation of G2/M transition of mitotic cell cycle"/>
    <property type="evidence" value="ECO:0007669"/>
    <property type="project" value="TreeGrafter"/>
</dbReference>
<dbReference type="GO" id="GO:0010468">
    <property type="term" value="P:regulation of gene expression"/>
    <property type="evidence" value="ECO:0007669"/>
    <property type="project" value="TreeGrafter"/>
</dbReference>
<dbReference type="GO" id="GO:0007165">
    <property type="term" value="P:signal transduction"/>
    <property type="evidence" value="ECO:0007669"/>
    <property type="project" value="TreeGrafter"/>
</dbReference>
<dbReference type="CDD" id="cd07835">
    <property type="entry name" value="STKc_CDK1_CdkB_like"/>
    <property type="match status" value="1"/>
</dbReference>
<dbReference type="FunFam" id="1.10.510.10:FF:000144">
    <property type="entry name" value="Cyclin-dependent kinase 2"/>
    <property type="match status" value="1"/>
</dbReference>
<dbReference type="FunFam" id="3.30.200.20:FF:000027">
    <property type="entry name" value="Putative Cyclin-dependent kinase 1"/>
    <property type="match status" value="1"/>
</dbReference>
<dbReference type="Gene3D" id="3.30.200.20">
    <property type="entry name" value="Phosphorylase Kinase, domain 1"/>
    <property type="match status" value="1"/>
</dbReference>
<dbReference type="Gene3D" id="1.10.510.10">
    <property type="entry name" value="Transferase(Phosphotransferase) domain 1"/>
    <property type="match status" value="1"/>
</dbReference>
<dbReference type="InterPro" id="IPR050108">
    <property type="entry name" value="CDK"/>
</dbReference>
<dbReference type="InterPro" id="IPR011009">
    <property type="entry name" value="Kinase-like_dom_sf"/>
</dbReference>
<dbReference type="InterPro" id="IPR000719">
    <property type="entry name" value="Prot_kinase_dom"/>
</dbReference>
<dbReference type="InterPro" id="IPR017441">
    <property type="entry name" value="Protein_kinase_ATP_BS"/>
</dbReference>
<dbReference type="InterPro" id="IPR008271">
    <property type="entry name" value="Ser/Thr_kinase_AS"/>
</dbReference>
<dbReference type="PANTHER" id="PTHR24056">
    <property type="entry name" value="CELL DIVISION PROTEIN KINASE"/>
    <property type="match status" value="1"/>
</dbReference>
<dbReference type="PANTHER" id="PTHR24056:SF254">
    <property type="entry name" value="CYCLIN-DEPENDENT KINASE 2"/>
    <property type="match status" value="1"/>
</dbReference>
<dbReference type="Pfam" id="PF00069">
    <property type="entry name" value="Pkinase"/>
    <property type="match status" value="1"/>
</dbReference>
<dbReference type="SMART" id="SM00220">
    <property type="entry name" value="S_TKc"/>
    <property type="match status" value="1"/>
</dbReference>
<dbReference type="SUPFAM" id="SSF56112">
    <property type="entry name" value="Protein kinase-like (PK-like)"/>
    <property type="match status" value="1"/>
</dbReference>
<dbReference type="PROSITE" id="PS00107">
    <property type="entry name" value="PROTEIN_KINASE_ATP"/>
    <property type="match status" value="1"/>
</dbReference>
<dbReference type="PROSITE" id="PS50011">
    <property type="entry name" value="PROTEIN_KINASE_DOM"/>
    <property type="match status" value="1"/>
</dbReference>
<dbReference type="PROSITE" id="PS00108">
    <property type="entry name" value="PROTEIN_KINASE_ST"/>
    <property type="match status" value="1"/>
</dbReference>
<keyword id="KW-0067">ATP-binding</keyword>
<keyword id="KW-0131">Cell cycle</keyword>
<keyword id="KW-0132">Cell division</keyword>
<keyword id="KW-0418">Kinase</keyword>
<keyword id="KW-0498">Mitosis</keyword>
<keyword id="KW-0547">Nucleotide-binding</keyword>
<keyword id="KW-0597">Phosphoprotein</keyword>
<keyword id="KW-0723">Serine/threonine-protein kinase</keyword>
<keyword id="KW-0808">Transferase</keyword>
<name>CDK1_AJECA</name>
<feature type="chain" id="PRO_0000085718" description="Cyclin-dependent kinase 1">
    <location>
        <begin position="1"/>
        <end position="324"/>
    </location>
</feature>
<feature type="domain" description="Protein kinase" evidence="6">
    <location>
        <begin position="4"/>
        <end position="307"/>
    </location>
</feature>
<feature type="active site" description="Proton acceptor" evidence="6 7">
    <location>
        <position position="148"/>
    </location>
</feature>
<feature type="binding site" evidence="6">
    <location>
        <begin position="10"/>
        <end position="18"/>
    </location>
    <ligand>
        <name>ATP</name>
        <dbReference type="ChEBI" id="CHEBI:30616"/>
    </ligand>
</feature>
<feature type="binding site" evidence="6">
    <location>
        <position position="34"/>
    </location>
    <ligand>
        <name>ATP</name>
        <dbReference type="ChEBI" id="CHEBI:30616"/>
    </ligand>
</feature>
<feature type="modified residue" description="Phosphothreonine" evidence="1">
    <location>
        <position position="14"/>
    </location>
</feature>
<feature type="modified residue" description="Phosphotyrosine" evidence="1">
    <location>
        <position position="15"/>
    </location>
</feature>
<feature type="modified residue" description="Phosphothreonine; by CAK" evidence="1">
    <location>
        <position position="181"/>
    </location>
</feature>
<sequence length="324" mass="36824">MENYQKIEKIGEGTYGVVYKARDLTHPNRIVALKKIRLEAEDEGVPSTAIREISLLKEMHDPNIVRLLNIVHADGHKLYLVFEFLDLDLKKYMEALPVSEGGRGKALPDGSTLDMNRLGLGEAMVKKFMAQLVEGIRYCHSHRVLHRDLKPQNLLIDREGNLKLADFGLARAFGVPLRTYTHEVVTLWYRAPEILLGGRQYSTGVDMWSVGAIFAEMCTRKPLFPGDSEIDEIFKIFKLLGTPDENTWPGVTSFPDFKASFPKWKREDTRKLVPGLERNGLDLLDAMLEYDPARRISAKQACMHPYFQAGSSAYSGRERLQPYP</sequence>
<reference key="1">
    <citation type="journal article" date="1994" name="Gene">
        <title>The Histoplasma capsulatum cdc2 gene is transcriptionally regulated during the morphologic transition.</title>
        <authorList>
            <person name="di Lallo G."/>
            <person name="Gargano S."/>
            <person name="Maresca B."/>
        </authorList>
    </citation>
    <scope>NUCLEOTIDE SEQUENCE [GENOMIC DNA]</scope>
    <source>
        <strain>ATCC 26032 / G217B</strain>
    </source>
</reference>
<evidence type="ECO:0000250" key="1"/>
<evidence type="ECO:0000250" key="2">
    <source>
        <dbReference type="UniProtKB" id="P00546"/>
    </source>
</evidence>
<evidence type="ECO:0000250" key="3">
    <source>
        <dbReference type="UniProtKB" id="P04551"/>
    </source>
</evidence>
<evidence type="ECO:0000250" key="4">
    <source>
        <dbReference type="UniProtKB" id="P06493"/>
    </source>
</evidence>
<evidence type="ECO:0000250" key="5">
    <source>
        <dbReference type="UniProtKB" id="P24941"/>
    </source>
</evidence>
<evidence type="ECO:0000255" key="6">
    <source>
        <dbReference type="PROSITE-ProRule" id="PRU00159"/>
    </source>
</evidence>
<evidence type="ECO:0000255" key="7">
    <source>
        <dbReference type="PROSITE-ProRule" id="PRU10027"/>
    </source>
</evidence>
<evidence type="ECO:0000303" key="8">
    <source>
    </source>
</evidence>
<evidence type="ECO:0000305" key="9"/>
<protein>
    <recommendedName>
        <fullName evidence="2">Cyclin-dependent kinase 1</fullName>
        <shortName evidence="2">CDK1</shortName>
        <ecNumber evidence="3">2.7.11.22</ecNumber>
    </recommendedName>
    <alternativeName>
        <fullName>Cell division protein kinase 1</fullName>
    </alternativeName>
</protein>